<sequence length="120" mass="12686">MASRKEALVRRANRVRRQIKAVANGRPRLSVHRSSKNIYVQVIDDVAGRTLAAASTLDGSLRSSLKTGADTAAAAAVGKLVAERAVAAGVKEVVFDRGAFIYHGRIKALAEAAREGGLSF</sequence>
<feature type="chain" id="PRO_1000166200" description="Large ribosomal subunit protein uL18">
    <location>
        <begin position="1"/>
        <end position="120"/>
    </location>
</feature>
<organism>
    <name type="scientific">Allorhizobium ampelinum (strain ATCC BAA-846 / DSM 112012 / S4)</name>
    <name type="common">Agrobacterium vitis (strain S4)</name>
    <dbReference type="NCBI Taxonomy" id="311402"/>
    <lineage>
        <taxon>Bacteria</taxon>
        <taxon>Pseudomonadati</taxon>
        <taxon>Pseudomonadota</taxon>
        <taxon>Alphaproteobacteria</taxon>
        <taxon>Hyphomicrobiales</taxon>
        <taxon>Rhizobiaceae</taxon>
        <taxon>Rhizobium/Agrobacterium group</taxon>
        <taxon>Allorhizobium</taxon>
        <taxon>Allorhizobium ampelinum</taxon>
    </lineage>
</organism>
<name>RL18_ALLAM</name>
<gene>
    <name evidence="1" type="primary">rplR</name>
    <name type="ordered locus">Avi_1857</name>
</gene>
<proteinExistence type="inferred from homology"/>
<evidence type="ECO:0000255" key="1">
    <source>
        <dbReference type="HAMAP-Rule" id="MF_01337"/>
    </source>
</evidence>
<evidence type="ECO:0000305" key="2"/>
<reference key="1">
    <citation type="journal article" date="2009" name="J. Bacteriol.">
        <title>Genome sequences of three Agrobacterium biovars help elucidate the evolution of multichromosome genomes in bacteria.</title>
        <authorList>
            <person name="Slater S.C."/>
            <person name="Goldman B.S."/>
            <person name="Goodner B."/>
            <person name="Setubal J.C."/>
            <person name="Farrand S.K."/>
            <person name="Nester E.W."/>
            <person name="Burr T.J."/>
            <person name="Banta L."/>
            <person name="Dickerman A.W."/>
            <person name="Paulsen I."/>
            <person name="Otten L."/>
            <person name="Suen G."/>
            <person name="Welch R."/>
            <person name="Almeida N.F."/>
            <person name="Arnold F."/>
            <person name="Burton O.T."/>
            <person name="Du Z."/>
            <person name="Ewing A."/>
            <person name="Godsy E."/>
            <person name="Heisel S."/>
            <person name="Houmiel K.L."/>
            <person name="Jhaveri J."/>
            <person name="Lu J."/>
            <person name="Miller N.M."/>
            <person name="Norton S."/>
            <person name="Chen Q."/>
            <person name="Phoolcharoen W."/>
            <person name="Ohlin V."/>
            <person name="Ondrusek D."/>
            <person name="Pride N."/>
            <person name="Stricklin S.L."/>
            <person name="Sun J."/>
            <person name="Wheeler C."/>
            <person name="Wilson L."/>
            <person name="Zhu H."/>
            <person name="Wood D.W."/>
        </authorList>
    </citation>
    <scope>NUCLEOTIDE SEQUENCE [LARGE SCALE GENOMIC DNA]</scope>
    <source>
        <strain>ATCC BAA-846 / DSM 112012 / S4</strain>
    </source>
</reference>
<keyword id="KW-1185">Reference proteome</keyword>
<keyword id="KW-0687">Ribonucleoprotein</keyword>
<keyword id="KW-0689">Ribosomal protein</keyword>
<keyword id="KW-0694">RNA-binding</keyword>
<keyword id="KW-0699">rRNA-binding</keyword>
<protein>
    <recommendedName>
        <fullName evidence="1">Large ribosomal subunit protein uL18</fullName>
    </recommendedName>
    <alternativeName>
        <fullName evidence="2">50S ribosomal protein L18</fullName>
    </alternativeName>
</protein>
<dbReference type="EMBL" id="CP000633">
    <property type="protein sequence ID" value="ACM36333.1"/>
    <property type="molecule type" value="Genomic_DNA"/>
</dbReference>
<dbReference type="RefSeq" id="WP_015915754.1">
    <property type="nucleotide sequence ID" value="NC_011989.1"/>
</dbReference>
<dbReference type="SMR" id="B9JVQ3"/>
<dbReference type="STRING" id="311402.Avi_1857"/>
<dbReference type="GeneID" id="60682419"/>
<dbReference type="KEGG" id="avi:Avi_1857"/>
<dbReference type="eggNOG" id="COG0256">
    <property type="taxonomic scope" value="Bacteria"/>
</dbReference>
<dbReference type="HOGENOM" id="CLU_098841_0_1_5"/>
<dbReference type="Proteomes" id="UP000001596">
    <property type="component" value="Chromosome 1"/>
</dbReference>
<dbReference type="GO" id="GO:0022625">
    <property type="term" value="C:cytosolic large ribosomal subunit"/>
    <property type="evidence" value="ECO:0007669"/>
    <property type="project" value="TreeGrafter"/>
</dbReference>
<dbReference type="GO" id="GO:0008097">
    <property type="term" value="F:5S rRNA binding"/>
    <property type="evidence" value="ECO:0007669"/>
    <property type="project" value="TreeGrafter"/>
</dbReference>
<dbReference type="GO" id="GO:0003735">
    <property type="term" value="F:structural constituent of ribosome"/>
    <property type="evidence" value="ECO:0007669"/>
    <property type="project" value="InterPro"/>
</dbReference>
<dbReference type="GO" id="GO:0006412">
    <property type="term" value="P:translation"/>
    <property type="evidence" value="ECO:0007669"/>
    <property type="project" value="UniProtKB-UniRule"/>
</dbReference>
<dbReference type="CDD" id="cd00432">
    <property type="entry name" value="Ribosomal_L18_L5e"/>
    <property type="match status" value="1"/>
</dbReference>
<dbReference type="FunFam" id="3.30.420.100:FF:000001">
    <property type="entry name" value="50S ribosomal protein L18"/>
    <property type="match status" value="1"/>
</dbReference>
<dbReference type="Gene3D" id="3.30.420.100">
    <property type="match status" value="1"/>
</dbReference>
<dbReference type="HAMAP" id="MF_01337_B">
    <property type="entry name" value="Ribosomal_uL18_B"/>
    <property type="match status" value="1"/>
</dbReference>
<dbReference type="InterPro" id="IPR004389">
    <property type="entry name" value="Ribosomal_uL18_bac-type"/>
</dbReference>
<dbReference type="InterPro" id="IPR005484">
    <property type="entry name" value="Ribosomal_uL18_bac/euk"/>
</dbReference>
<dbReference type="NCBIfam" id="TIGR00060">
    <property type="entry name" value="L18_bact"/>
    <property type="match status" value="1"/>
</dbReference>
<dbReference type="PANTHER" id="PTHR12899">
    <property type="entry name" value="39S RIBOSOMAL PROTEIN L18, MITOCHONDRIAL"/>
    <property type="match status" value="1"/>
</dbReference>
<dbReference type="PANTHER" id="PTHR12899:SF3">
    <property type="entry name" value="LARGE RIBOSOMAL SUBUNIT PROTEIN UL18M"/>
    <property type="match status" value="1"/>
</dbReference>
<dbReference type="Pfam" id="PF00861">
    <property type="entry name" value="Ribosomal_L18p"/>
    <property type="match status" value="1"/>
</dbReference>
<dbReference type="SUPFAM" id="SSF53137">
    <property type="entry name" value="Translational machinery components"/>
    <property type="match status" value="1"/>
</dbReference>
<accession>B9JVQ3</accession>
<comment type="function">
    <text evidence="1">This is one of the proteins that bind and probably mediate the attachment of the 5S RNA into the large ribosomal subunit, where it forms part of the central protuberance.</text>
</comment>
<comment type="subunit">
    <text evidence="1">Part of the 50S ribosomal subunit; part of the 5S rRNA/L5/L18/L25 subcomplex. Contacts the 5S and 23S rRNAs.</text>
</comment>
<comment type="similarity">
    <text evidence="1">Belongs to the universal ribosomal protein uL18 family.</text>
</comment>